<proteinExistence type="evidence at protein level"/>
<dbReference type="EC" id="1.1.1.140" evidence="3"/>
<dbReference type="EMBL" id="J02708">
    <property type="protein sequence ID" value="AAC13413.1"/>
    <property type="molecule type" value="Genomic_DNA"/>
</dbReference>
<dbReference type="EMBL" id="U29579">
    <property type="protein sequence ID" value="AAA69214.1"/>
    <property type="molecule type" value="Genomic_DNA"/>
</dbReference>
<dbReference type="EMBL" id="U00096">
    <property type="protein sequence ID" value="AAC75747.1"/>
    <property type="molecule type" value="Genomic_DNA"/>
</dbReference>
<dbReference type="EMBL" id="AP009048">
    <property type="protein sequence ID" value="BAA16566.1"/>
    <property type="molecule type" value="Genomic_DNA"/>
</dbReference>
<dbReference type="PIR" id="E65050">
    <property type="entry name" value="DEECSP"/>
</dbReference>
<dbReference type="RefSeq" id="NP_417185.1">
    <property type="nucleotide sequence ID" value="NC_000913.3"/>
</dbReference>
<dbReference type="RefSeq" id="WP_001077358.1">
    <property type="nucleotide sequence ID" value="NZ_LN832404.1"/>
</dbReference>
<dbReference type="SMR" id="P05707"/>
<dbReference type="BioGRID" id="4260703">
    <property type="interactions" value="23"/>
</dbReference>
<dbReference type="BioGRID" id="853206">
    <property type="interactions" value="2"/>
</dbReference>
<dbReference type="DIP" id="DIP-10917N"/>
<dbReference type="FunCoup" id="P05707">
    <property type="interactions" value="52"/>
</dbReference>
<dbReference type="IntAct" id="P05707">
    <property type="interactions" value="3"/>
</dbReference>
<dbReference type="STRING" id="511145.b2705"/>
<dbReference type="jPOST" id="P05707"/>
<dbReference type="PaxDb" id="511145-b2705"/>
<dbReference type="EnsemblBacteria" id="AAC75747">
    <property type="protein sequence ID" value="AAC75747"/>
    <property type="gene ID" value="b2705"/>
</dbReference>
<dbReference type="GeneID" id="75205946"/>
<dbReference type="GeneID" id="948937"/>
<dbReference type="KEGG" id="ecj:JW2674"/>
<dbReference type="KEGG" id="eco:b2705"/>
<dbReference type="KEGG" id="ecoc:C3026_14890"/>
<dbReference type="PATRIC" id="fig|1411691.4.peg.4037"/>
<dbReference type="EchoBASE" id="EB0964"/>
<dbReference type="eggNOG" id="COG1028">
    <property type="taxonomic scope" value="Bacteria"/>
</dbReference>
<dbReference type="HOGENOM" id="CLU_010194_1_0_6"/>
<dbReference type="InParanoid" id="P05707"/>
<dbReference type="OMA" id="RSMTKFG"/>
<dbReference type="OrthoDB" id="5898578at2"/>
<dbReference type="PhylomeDB" id="P05707"/>
<dbReference type="BioCyc" id="EcoCyc:SORB6PDEHYDROG-MONOMER"/>
<dbReference type="BioCyc" id="MetaCyc:SORB6PDEHYDROG-MONOMER"/>
<dbReference type="UniPathway" id="UPA00812">
    <property type="reaction ID" value="UER00783"/>
</dbReference>
<dbReference type="PRO" id="PR:P05707"/>
<dbReference type="Proteomes" id="UP000000625">
    <property type="component" value="Chromosome"/>
</dbReference>
<dbReference type="GO" id="GO:0032991">
    <property type="term" value="C:protein-containing complex"/>
    <property type="evidence" value="ECO:0000314"/>
    <property type="project" value="EcoCyc"/>
</dbReference>
<dbReference type="GO" id="GO:0042802">
    <property type="term" value="F:identical protein binding"/>
    <property type="evidence" value="ECO:0000353"/>
    <property type="project" value="EcoCyc"/>
</dbReference>
<dbReference type="GO" id="GO:0016616">
    <property type="term" value="F:oxidoreductase activity, acting on the CH-OH group of donors, NAD or NADP as acceptor"/>
    <property type="evidence" value="ECO:0000318"/>
    <property type="project" value="GO_Central"/>
</dbReference>
<dbReference type="GO" id="GO:0009010">
    <property type="term" value="F:sorbitol-6-phosphate 2-dehydrogenase activity"/>
    <property type="evidence" value="ECO:0000314"/>
    <property type="project" value="EcoCyc"/>
</dbReference>
<dbReference type="GO" id="GO:0051289">
    <property type="term" value="P:protein homotetramerization"/>
    <property type="evidence" value="ECO:0000353"/>
    <property type="project" value="EcoCyc"/>
</dbReference>
<dbReference type="GO" id="GO:0006062">
    <property type="term" value="P:sorbitol catabolic process"/>
    <property type="evidence" value="ECO:0000269"/>
    <property type="project" value="EcoCyc"/>
</dbReference>
<dbReference type="CDD" id="cd05322">
    <property type="entry name" value="SDH_SDR_c_like"/>
    <property type="match status" value="1"/>
</dbReference>
<dbReference type="FunFam" id="3.40.50.720:FF:000091">
    <property type="entry name" value="Sorbitol-6-phosphate dehydrogenase"/>
    <property type="match status" value="1"/>
</dbReference>
<dbReference type="Gene3D" id="3.40.50.720">
    <property type="entry name" value="NAD(P)-binding Rossmann-like Domain"/>
    <property type="match status" value="1"/>
</dbReference>
<dbReference type="InterPro" id="IPR036291">
    <property type="entry name" value="NAD(P)-bd_dom_sf"/>
</dbReference>
<dbReference type="InterPro" id="IPR020904">
    <property type="entry name" value="Sc_DH/Rdtase_CS"/>
</dbReference>
<dbReference type="InterPro" id="IPR002347">
    <property type="entry name" value="SDR_fam"/>
</dbReference>
<dbReference type="NCBIfam" id="NF009050">
    <property type="entry name" value="PRK12384.1"/>
    <property type="match status" value="1"/>
</dbReference>
<dbReference type="PANTHER" id="PTHR43669">
    <property type="entry name" value="5-KETO-D-GLUCONATE 5-REDUCTASE"/>
    <property type="match status" value="1"/>
</dbReference>
<dbReference type="PANTHER" id="PTHR43669:SF8">
    <property type="entry name" value="SHORT-CHAIN TYPE DEHYDROGENASE_REDUCTASE-RELATED"/>
    <property type="match status" value="1"/>
</dbReference>
<dbReference type="Pfam" id="PF00106">
    <property type="entry name" value="adh_short"/>
    <property type="match status" value="1"/>
</dbReference>
<dbReference type="PRINTS" id="PR00081">
    <property type="entry name" value="GDHRDH"/>
</dbReference>
<dbReference type="PRINTS" id="PR00080">
    <property type="entry name" value="SDRFAMILY"/>
</dbReference>
<dbReference type="SUPFAM" id="SSF51735">
    <property type="entry name" value="NAD(P)-binding Rossmann-fold domains"/>
    <property type="match status" value="1"/>
</dbReference>
<dbReference type="PROSITE" id="PS00061">
    <property type="entry name" value="ADH_SHORT"/>
    <property type="match status" value="1"/>
</dbReference>
<reference key="1">
    <citation type="journal article" date="1987" name="J. Biol. Chem.">
        <title>Glucitol-specific enzymes of the phosphotransferase system in Escherichia coli. Nucleotide sequence of the gut operon.</title>
        <authorList>
            <person name="Yamada M."/>
            <person name="Saier M.H. Jr."/>
        </authorList>
    </citation>
    <scope>NUCLEOTIDE SEQUENCE [GENOMIC DNA]</scope>
</reference>
<reference key="2">
    <citation type="journal article" date="1997" name="DNA Res.">
        <title>Construction of a contiguous 874-kb sequence of the Escherichia coli-K12 genome corresponding to 50.0-68.8 min on the linkage map and analysis of its sequence features.</title>
        <authorList>
            <person name="Yamamoto Y."/>
            <person name="Aiba H."/>
            <person name="Baba T."/>
            <person name="Hayashi K."/>
            <person name="Inada T."/>
            <person name="Isono K."/>
            <person name="Itoh T."/>
            <person name="Kimura S."/>
            <person name="Kitagawa M."/>
            <person name="Makino K."/>
            <person name="Miki T."/>
            <person name="Mitsuhashi N."/>
            <person name="Mizobuchi K."/>
            <person name="Mori H."/>
            <person name="Nakade S."/>
            <person name="Nakamura Y."/>
            <person name="Nashimoto H."/>
            <person name="Oshima T."/>
            <person name="Oyama S."/>
            <person name="Saito N."/>
            <person name="Sampei G."/>
            <person name="Satoh Y."/>
            <person name="Sivasundaram S."/>
            <person name="Tagami H."/>
            <person name="Takahashi H."/>
            <person name="Takeda J."/>
            <person name="Takemoto K."/>
            <person name="Uehara K."/>
            <person name="Wada C."/>
            <person name="Yamagata S."/>
            <person name="Horiuchi T."/>
        </authorList>
    </citation>
    <scope>NUCLEOTIDE SEQUENCE [LARGE SCALE GENOMIC DNA]</scope>
    <source>
        <strain>K12 / W3110 / ATCC 27325 / DSM 5911</strain>
    </source>
</reference>
<reference key="3">
    <citation type="journal article" date="1997" name="Science">
        <title>The complete genome sequence of Escherichia coli K-12.</title>
        <authorList>
            <person name="Blattner F.R."/>
            <person name="Plunkett G. III"/>
            <person name="Bloch C.A."/>
            <person name="Perna N.T."/>
            <person name="Burland V."/>
            <person name="Riley M."/>
            <person name="Collado-Vides J."/>
            <person name="Glasner J.D."/>
            <person name="Rode C.K."/>
            <person name="Mayhew G.F."/>
            <person name="Gregor J."/>
            <person name="Davis N.W."/>
            <person name="Kirkpatrick H.A."/>
            <person name="Goeden M.A."/>
            <person name="Rose D.J."/>
            <person name="Mau B."/>
            <person name="Shao Y."/>
        </authorList>
    </citation>
    <scope>NUCLEOTIDE SEQUENCE [LARGE SCALE GENOMIC DNA]</scope>
    <source>
        <strain>K12 / MG1655 / ATCC 47076</strain>
    </source>
</reference>
<reference key="4">
    <citation type="journal article" date="2006" name="Mol. Syst. Biol.">
        <title>Highly accurate genome sequences of Escherichia coli K-12 strains MG1655 and W3110.</title>
        <authorList>
            <person name="Hayashi K."/>
            <person name="Morooka N."/>
            <person name="Yamamoto Y."/>
            <person name="Fujita K."/>
            <person name="Isono K."/>
            <person name="Choi S."/>
            <person name="Ohtsubo E."/>
            <person name="Baba T."/>
            <person name="Wanner B.L."/>
            <person name="Mori H."/>
            <person name="Horiuchi T."/>
        </authorList>
    </citation>
    <scope>NUCLEOTIDE SEQUENCE [LARGE SCALE GENOMIC DNA]</scope>
    <source>
        <strain>K12 / W3110 / ATCC 27325 / DSM 5911</strain>
    </source>
</reference>
<reference key="5">
    <citation type="journal article" date="1984" name="J. Bacteriol.">
        <title>Purification and properties of D-mannitol-1-phosphate dehydrogenase and D-glucitol-6-phosphate dehydrogenase from Escherichia coli.</title>
        <authorList>
            <person name="Novotny M.J."/>
            <person name="Reizer J."/>
            <person name="Esch F."/>
            <person name="Saier M.H. Jr."/>
        </authorList>
    </citation>
    <scope>PROTEIN SEQUENCE OF 1-34</scope>
    <scope>CATALYTIC ACTIVITY</scope>
    <scope>SUBUNIT</scope>
</reference>
<comment type="catalytic activity">
    <reaction evidence="3">
        <text>D-sorbitol 6-phosphate + NAD(+) = beta-D-fructose 6-phosphate + NADH + H(+)</text>
        <dbReference type="Rhea" id="RHEA:19837"/>
        <dbReference type="ChEBI" id="CHEBI:15378"/>
        <dbReference type="ChEBI" id="CHEBI:57540"/>
        <dbReference type="ChEBI" id="CHEBI:57634"/>
        <dbReference type="ChEBI" id="CHEBI:57945"/>
        <dbReference type="ChEBI" id="CHEBI:60084"/>
        <dbReference type="EC" id="1.1.1.140"/>
    </reaction>
</comment>
<comment type="pathway">
    <text evidence="5">Carbohydrate metabolism; D-sorbitol degradation; D-fructose 6-phosphate from D-sorbitol 6-phosphate: step 1/1.</text>
</comment>
<comment type="subunit">
    <text evidence="3">Homotetramer.</text>
</comment>
<comment type="similarity">
    <text evidence="4">Belongs to the short-chain dehydrogenases/reductases (SDR) family.</text>
</comment>
<accession>P05707</accession>
<gene>
    <name type="primary">srlD</name>
    <name type="synonym">gutD</name>
    <name type="ordered locus">b2705</name>
    <name type="ordered locus">JW2674</name>
</gene>
<organism>
    <name type="scientific">Escherichia coli (strain K12)</name>
    <dbReference type="NCBI Taxonomy" id="83333"/>
    <lineage>
        <taxon>Bacteria</taxon>
        <taxon>Pseudomonadati</taxon>
        <taxon>Pseudomonadota</taxon>
        <taxon>Gammaproteobacteria</taxon>
        <taxon>Enterobacterales</taxon>
        <taxon>Enterobacteriaceae</taxon>
        <taxon>Escherichia</taxon>
    </lineage>
</organism>
<protein>
    <recommendedName>
        <fullName>Sorbitol-6-phosphate 2-dehydrogenase</fullName>
        <ecNumber evidence="3">1.1.1.140</ecNumber>
    </recommendedName>
    <alternativeName>
        <fullName>Glucitol-6-phosphate dehydrogenase</fullName>
    </alternativeName>
    <alternativeName>
        <fullName>Ketosephosphate reductase</fullName>
    </alternativeName>
</protein>
<name>SRLD_ECOLI</name>
<keyword id="KW-0903">Direct protein sequencing</keyword>
<keyword id="KW-0520">NAD</keyword>
<keyword id="KW-0560">Oxidoreductase</keyword>
<keyword id="KW-1185">Reference proteome</keyword>
<evidence type="ECO:0000250" key="1"/>
<evidence type="ECO:0000255" key="2">
    <source>
        <dbReference type="PROSITE-ProRule" id="PRU10001"/>
    </source>
</evidence>
<evidence type="ECO:0000269" key="3">
    <source>
    </source>
</evidence>
<evidence type="ECO:0000305" key="4"/>
<evidence type="ECO:0000305" key="5">
    <source>
    </source>
</evidence>
<sequence>MNQVAVVIGGGQTLGAFLCHGLAAEGYRVAVVDIQSDKAANVAQEINAEYGESMAYGFGADATSEQSVLALSRGVDEIFGRVDLLVYSAGIAKAAFISDFQLGDFDRSLQVNLVGYFLCAREFSRLMIRDGIQGRIIQINSKSGKVGSKHNSGYSAAKFGGVGLTQSLALDLAEYGITVHSLMLGNLLKSPMFQSLLPQYATKLGIKPDQVEQYYIDKVPLKRGCDYQDVLNMLLFYASPKASYCTGQSINVTGGQVMF</sequence>
<feature type="chain" id="PRO_0000054779" description="Sorbitol-6-phosphate 2-dehydrogenase">
    <location>
        <begin position="1"/>
        <end position="259"/>
    </location>
</feature>
<feature type="active site" description="Proton acceptor" evidence="2">
    <location>
        <position position="154"/>
    </location>
</feature>
<feature type="binding site" evidence="1">
    <location>
        <begin position="4"/>
        <end position="33"/>
    </location>
    <ligand>
        <name>NAD(+)</name>
        <dbReference type="ChEBI" id="CHEBI:57540"/>
    </ligand>
</feature>
<feature type="binding site" evidence="1">
    <location>
        <position position="141"/>
    </location>
    <ligand>
        <name>substrate</name>
    </ligand>
</feature>
<feature type="sequence conflict" description="In Ref. 1; AAC13413." evidence="4" ref="1">
    <original>V</original>
    <variation>C</variation>
    <location>
        <position position="68"/>
    </location>
</feature>